<keyword id="KW-0067">ATP-binding</keyword>
<keyword id="KW-0143">Chaperone</keyword>
<keyword id="KW-0547">Nucleotide-binding</keyword>
<gene>
    <name evidence="1" type="primary">hscA</name>
    <name type="ordered locus">PSPA7_1303</name>
</gene>
<name>HSCA_PSEP7</name>
<dbReference type="EMBL" id="CP000744">
    <property type="protein sequence ID" value="ABR85726.1"/>
    <property type="molecule type" value="Genomic_DNA"/>
</dbReference>
<dbReference type="RefSeq" id="WP_012074556.1">
    <property type="nucleotide sequence ID" value="NC_009656.1"/>
</dbReference>
<dbReference type="SMR" id="A6V0V2"/>
<dbReference type="KEGG" id="pap:PSPA7_1303"/>
<dbReference type="HOGENOM" id="CLU_005965_2_1_6"/>
<dbReference type="Proteomes" id="UP000001582">
    <property type="component" value="Chromosome"/>
</dbReference>
<dbReference type="GO" id="GO:0005524">
    <property type="term" value="F:ATP binding"/>
    <property type="evidence" value="ECO:0007669"/>
    <property type="project" value="UniProtKB-KW"/>
</dbReference>
<dbReference type="GO" id="GO:0016887">
    <property type="term" value="F:ATP hydrolysis activity"/>
    <property type="evidence" value="ECO:0007669"/>
    <property type="project" value="UniProtKB-UniRule"/>
</dbReference>
<dbReference type="GO" id="GO:0140662">
    <property type="term" value="F:ATP-dependent protein folding chaperone"/>
    <property type="evidence" value="ECO:0007669"/>
    <property type="project" value="InterPro"/>
</dbReference>
<dbReference type="GO" id="GO:0051082">
    <property type="term" value="F:unfolded protein binding"/>
    <property type="evidence" value="ECO:0007669"/>
    <property type="project" value="InterPro"/>
</dbReference>
<dbReference type="GO" id="GO:0016226">
    <property type="term" value="P:iron-sulfur cluster assembly"/>
    <property type="evidence" value="ECO:0007669"/>
    <property type="project" value="InterPro"/>
</dbReference>
<dbReference type="CDD" id="cd10236">
    <property type="entry name" value="ASKHA_NBD_HSP70_HscA"/>
    <property type="match status" value="1"/>
</dbReference>
<dbReference type="FunFam" id="3.30.420.40:FF:000046">
    <property type="entry name" value="Chaperone protein HscA"/>
    <property type="match status" value="1"/>
</dbReference>
<dbReference type="FunFam" id="2.60.34.10:FF:000005">
    <property type="entry name" value="Chaperone protein HscA homolog"/>
    <property type="match status" value="1"/>
</dbReference>
<dbReference type="Gene3D" id="1.20.1270.10">
    <property type="match status" value="1"/>
</dbReference>
<dbReference type="Gene3D" id="3.30.420.40">
    <property type="match status" value="2"/>
</dbReference>
<dbReference type="Gene3D" id="3.90.640.10">
    <property type="entry name" value="Actin, Chain A, domain 4"/>
    <property type="match status" value="1"/>
</dbReference>
<dbReference type="Gene3D" id="2.60.34.10">
    <property type="entry name" value="Substrate Binding Domain Of DNAk, Chain A, domain 1"/>
    <property type="match status" value="1"/>
</dbReference>
<dbReference type="HAMAP" id="MF_00679">
    <property type="entry name" value="HscA"/>
    <property type="match status" value="1"/>
</dbReference>
<dbReference type="InterPro" id="IPR043129">
    <property type="entry name" value="ATPase_NBD"/>
</dbReference>
<dbReference type="InterPro" id="IPR018181">
    <property type="entry name" value="Heat_shock_70_CS"/>
</dbReference>
<dbReference type="InterPro" id="IPR042039">
    <property type="entry name" value="HscA_NBD"/>
</dbReference>
<dbReference type="InterPro" id="IPR029048">
    <property type="entry name" value="HSP70_C_sf"/>
</dbReference>
<dbReference type="InterPro" id="IPR029047">
    <property type="entry name" value="HSP70_peptide-bd_sf"/>
</dbReference>
<dbReference type="InterPro" id="IPR013126">
    <property type="entry name" value="Hsp_70_fam"/>
</dbReference>
<dbReference type="InterPro" id="IPR010236">
    <property type="entry name" value="ISC_FeS_clus_asmbl_HscA"/>
</dbReference>
<dbReference type="NCBIfam" id="TIGR01991">
    <property type="entry name" value="HscA"/>
    <property type="match status" value="1"/>
</dbReference>
<dbReference type="NCBIfam" id="NF003520">
    <property type="entry name" value="PRK05183.1"/>
    <property type="match status" value="1"/>
</dbReference>
<dbReference type="PANTHER" id="PTHR19375">
    <property type="entry name" value="HEAT SHOCK PROTEIN 70KDA"/>
    <property type="match status" value="1"/>
</dbReference>
<dbReference type="Pfam" id="PF00012">
    <property type="entry name" value="HSP70"/>
    <property type="match status" value="1"/>
</dbReference>
<dbReference type="PRINTS" id="PR00301">
    <property type="entry name" value="HEATSHOCK70"/>
</dbReference>
<dbReference type="SUPFAM" id="SSF53067">
    <property type="entry name" value="Actin-like ATPase domain"/>
    <property type="match status" value="2"/>
</dbReference>
<dbReference type="SUPFAM" id="SSF100934">
    <property type="entry name" value="Heat shock protein 70kD (HSP70), C-terminal subdomain"/>
    <property type="match status" value="1"/>
</dbReference>
<dbReference type="SUPFAM" id="SSF100920">
    <property type="entry name" value="Heat shock protein 70kD (HSP70), peptide-binding domain"/>
    <property type="match status" value="1"/>
</dbReference>
<dbReference type="PROSITE" id="PS00297">
    <property type="entry name" value="HSP70_1"/>
    <property type="match status" value="1"/>
</dbReference>
<dbReference type="PROSITE" id="PS00329">
    <property type="entry name" value="HSP70_2"/>
    <property type="match status" value="1"/>
</dbReference>
<dbReference type="PROSITE" id="PS01036">
    <property type="entry name" value="HSP70_3"/>
    <property type="match status" value="1"/>
</dbReference>
<proteinExistence type="inferred from homology"/>
<sequence length="619" mass="66462">MALLQIAEPGQSPKPHERRLAVGIDLGTTNSLVAAVRSGVAEPLPDARGRLILPSAVRYHADRAEVGEGARAAAAQDPLNTIISVKRLMGRGLEDVKQLGEQLPYRFRQGESHMPFIETVQGLKSPVEVSADILRELRQRAETTLGGELVGAVITVPAYFDDAQRQATKDAARLAGLNVLRLLNEPTAAAVAYGLDKGAEGLVAIYDLGGGTFDISILRLTRGVFEVLATGGDTALGGDDFDHAVAGWVIEQAGLSADLDPGRQRELLQIACAAKERLTDATSVSVSYGDWRGELSRAKLDELIEPFIARSLRSCRRAVRDSGIDLEEIRSVVMVGGSTRVPRVRSAVGELFGCEPLTDIDPDQVVAIGAAIQADALAGNKRGEELLLLDVIPLSLGLETMGGLMEKVIPRNTTIPVARAQEFTTYKDGQTAMMIHVLQGERELVKDCRSLARFELRGIPPMVAGAAKIRVTFQVDADGLLGVSARELSSGVEASIQVKPSYGLTDGEIARMLKDSFDYAGDDKAARALREQQVEAQRLLEAVQSALDADGERLLDEEEHLAIAAQMDSLRELAGGSDTAAIENQIKRLSQVTDAFAARRMDATVKAALSGRRLNEIEE</sequence>
<accession>A6V0V2</accession>
<evidence type="ECO:0000255" key="1">
    <source>
        <dbReference type="HAMAP-Rule" id="MF_00679"/>
    </source>
</evidence>
<reference key="1">
    <citation type="submission" date="2007-06" db="EMBL/GenBank/DDBJ databases">
        <authorList>
            <person name="Dodson R.J."/>
            <person name="Harkins D."/>
            <person name="Paulsen I.T."/>
        </authorList>
    </citation>
    <scope>NUCLEOTIDE SEQUENCE [LARGE SCALE GENOMIC DNA]</scope>
    <source>
        <strain>DSM 24068 / PA7</strain>
    </source>
</reference>
<comment type="function">
    <text evidence="1">Chaperone involved in the maturation of iron-sulfur cluster-containing proteins. Has a low intrinsic ATPase activity which is markedly stimulated by HscB.</text>
</comment>
<comment type="similarity">
    <text evidence="1">Belongs to the heat shock protein 70 family.</text>
</comment>
<protein>
    <recommendedName>
        <fullName evidence="1">Chaperone protein HscA homolog</fullName>
    </recommendedName>
</protein>
<organism>
    <name type="scientific">Pseudomonas paraeruginosa (strain DSM 24068 / PA7)</name>
    <name type="common">Pseudomonas aeruginosa (strain PA7)</name>
    <dbReference type="NCBI Taxonomy" id="381754"/>
    <lineage>
        <taxon>Bacteria</taxon>
        <taxon>Pseudomonadati</taxon>
        <taxon>Pseudomonadota</taxon>
        <taxon>Gammaproteobacteria</taxon>
        <taxon>Pseudomonadales</taxon>
        <taxon>Pseudomonadaceae</taxon>
        <taxon>Pseudomonas</taxon>
        <taxon>Pseudomonas paraeruginosa</taxon>
    </lineage>
</organism>
<feature type="chain" id="PRO_1000044869" description="Chaperone protein HscA homolog">
    <location>
        <begin position="1"/>
        <end position="619"/>
    </location>
</feature>